<keyword id="KW-1185">Reference proteome</keyword>
<protein>
    <recommendedName>
        <fullName>Uncharacterized PPE family protein PPE25</fullName>
    </recommendedName>
</protein>
<gene>
    <name type="primary">PPE25</name>
    <name type="ordered locus">Rv1787</name>
</gene>
<evidence type="ECO:0000269" key="1">
    <source>
    </source>
</evidence>
<evidence type="ECO:0000303" key="2">
    <source>
    </source>
</evidence>
<evidence type="ECO:0000305" key="3"/>
<sequence>MDFGALPPEINSGRMYCGPGSGPMLAAAAAWDGVAVELGLAATGYASVIAELTGAPWVGAASLSMVAAATPYVAWLSQAAARAEQAGMQAAAAAAAYEAAFVMTVPPPVITANRVLVMTLIATNFFGQNSAAIAVAEAQYAEMWAQDAVAMYGYAAASASASRLIPFAAPPKTTNSAGVVAQVAAVAAMPGLLQRLSSAASVSWSNPNDWWLVRLLGSITPTERTTIVRLLGQSYFATGMAQFFASIAQQLTFGPGGTTAGSGGAWYPTPQFAGLGASRAVSASLARANKIGALSVPPSWVKTTALTESPVAHAVSANPTVGSSHGPHGLLRGLPLGSRITRRSGAFAHRYGFRHSVVARPPSAG</sequence>
<accession>P9WI13</accession>
<accession>L0TAL8</accession>
<accession>Q79FK8</accession>
<accession>Q8VJW5</accession>
<comment type="disruption phenotype">
    <text evidence="1">Mutants with simultaneous deletion of PPE25/PE18/PPE26/PPE27/PE19 genes have a slight growth defect at 100 mM phosphate in defined media, and at 30 mM phosphate, growth is severely impaired. Knockdown of PE32 or PPE65 in PPE25/PE18/PPE26/PPE27/PE19 deletion mutants result in a severely impaired growth in phosphate-limiting media.</text>
</comment>
<comment type="similarity">
    <text evidence="3">Belongs to the mycobacterial PPE family.</text>
</comment>
<reference key="1">
    <citation type="journal article" date="1998" name="Nature">
        <title>Deciphering the biology of Mycobacterium tuberculosis from the complete genome sequence.</title>
        <authorList>
            <person name="Cole S.T."/>
            <person name="Brosch R."/>
            <person name="Parkhill J."/>
            <person name="Garnier T."/>
            <person name="Churcher C.M."/>
            <person name="Harris D.E."/>
            <person name="Gordon S.V."/>
            <person name="Eiglmeier K."/>
            <person name="Gas S."/>
            <person name="Barry C.E. III"/>
            <person name="Tekaia F."/>
            <person name="Badcock K."/>
            <person name="Basham D."/>
            <person name="Brown D."/>
            <person name="Chillingworth T."/>
            <person name="Connor R."/>
            <person name="Davies R.M."/>
            <person name="Devlin K."/>
            <person name="Feltwell T."/>
            <person name="Gentles S."/>
            <person name="Hamlin N."/>
            <person name="Holroyd S."/>
            <person name="Hornsby T."/>
            <person name="Jagels K."/>
            <person name="Krogh A."/>
            <person name="McLean J."/>
            <person name="Moule S."/>
            <person name="Murphy L.D."/>
            <person name="Oliver S."/>
            <person name="Osborne J."/>
            <person name="Quail M.A."/>
            <person name="Rajandream M.A."/>
            <person name="Rogers J."/>
            <person name="Rutter S."/>
            <person name="Seeger K."/>
            <person name="Skelton S."/>
            <person name="Squares S."/>
            <person name="Squares R."/>
            <person name="Sulston J.E."/>
            <person name="Taylor K."/>
            <person name="Whitehead S."/>
            <person name="Barrell B.G."/>
        </authorList>
    </citation>
    <scope>NUCLEOTIDE SEQUENCE [LARGE SCALE GENOMIC DNA]</scope>
    <source>
        <strain>ATCC 25618 / H37Rv</strain>
    </source>
</reference>
<reference key="2">
    <citation type="journal article" date="2020" name="Science">
        <title>PE/PPE proteins mediate nutrient transport across the outer membrane of Mycobacterium tuberculosis.</title>
        <authorList>
            <person name="Wang Q."/>
            <person name="Boshoff H.I.M."/>
            <person name="Harrison J.R."/>
            <person name="Ray P.C."/>
            <person name="Green S.R."/>
            <person name="Wyatt P.G."/>
            <person name="Barry C.E. III"/>
        </authorList>
    </citation>
    <scope>DISRUPTION PHENOTYPE</scope>
    <source>
        <strain evidence="2">ATCC 27294 / TMC 102 / H37Rv</strain>
    </source>
</reference>
<feature type="chain" id="PRO_0000379588" description="Uncharacterized PPE family protein PPE25">
    <location>
        <begin position="1"/>
        <end position="365"/>
    </location>
</feature>
<name>PPE25_MYCTU</name>
<dbReference type="EMBL" id="AL123456">
    <property type="protein sequence ID" value="CCP44553.1"/>
    <property type="molecule type" value="Genomic_DNA"/>
</dbReference>
<dbReference type="PIR" id="E70929">
    <property type="entry name" value="E70929"/>
</dbReference>
<dbReference type="RefSeq" id="WP_003901254.1">
    <property type="nucleotide sequence ID" value="NZ_NVQJ01000037.1"/>
</dbReference>
<dbReference type="RefSeq" id="YP_177833.1">
    <property type="nucleotide sequence ID" value="NC_000962.3"/>
</dbReference>
<dbReference type="SMR" id="P9WI13"/>
<dbReference type="STRING" id="83332.Rv1787"/>
<dbReference type="PaxDb" id="83332-Rv1787"/>
<dbReference type="DNASU" id="885827"/>
<dbReference type="GeneID" id="885827"/>
<dbReference type="KEGG" id="mtu:Rv1787"/>
<dbReference type="KEGG" id="mtv:RVBD_1787"/>
<dbReference type="TubercuList" id="Rv1787"/>
<dbReference type="eggNOG" id="COG5651">
    <property type="taxonomic scope" value="Bacteria"/>
</dbReference>
<dbReference type="InParanoid" id="P9WI13"/>
<dbReference type="OrthoDB" id="4753201at2"/>
<dbReference type="PhylomeDB" id="P9WI13"/>
<dbReference type="PHI-base" id="PHI:6422"/>
<dbReference type="Proteomes" id="UP000001584">
    <property type="component" value="Chromosome"/>
</dbReference>
<dbReference type="GO" id="GO:0035435">
    <property type="term" value="P:phosphate ion transmembrane transport"/>
    <property type="evidence" value="ECO:0000316"/>
    <property type="project" value="UniProtKB"/>
</dbReference>
<dbReference type="GO" id="GO:0052572">
    <property type="term" value="P:response to host immune response"/>
    <property type="evidence" value="ECO:0000318"/>
    <property type="project" value="GO_Central"/>
</dbReference>
<dbReference type="FunFam" id="1.20.1260.20:FF:000001">
    <property type="entry name" value="PPE family protein PPE41"/>
    <property type="match status" value="1"/>
</dbReference>
<dbReference type="Gene3D" id="1.20.1260.20">
    <property type="entry name" value="PPE superfamily"/>
    <property type="match status" value="1"/>
</dbReference>
<dbReference type="InterPro" id="IPR022171">
    <property type="entry name" value="PPE_C"/>
</dbReference>
<dbReference type="InterPro" id="IPR000030">
    <property type="entry name" value="PPE_dom"/>
</dbReference>
<dbReference type="InterPro" id="IPR038332">
    <property type="entry name" value="PPE_sf"/>
</dbReference>
<dbReference type="PANTHER" id="PTHR46766">
    <property type="entry name" value="GLUTAMINE-RICH PROTEIN 2"/>
    <property type="match status" value="1"/>
</dbReference>
<dbReference type="PANTHER" id="PTHR46766:SF1">
    <property type="entry name" value="GLUTAMINE-RICH PROTEIN 2"/>
    <property type="match status" value="1"/>
</dbReference>
<dbReference type="Pfam" id="PF00823">
    <property type="entry name" value="PPE"/>
    <property type="match status" value="1"/>
</dbReference>
<dbReference type="Pfam" id="PF12484">
    <property type="entry name" value="PPE-SVP"/>
    <property type="match status" value="1"/>
</dbReference>
<dbReference type="SUPFAM" id="SSF140459">
    <property type="entry name" value="PE/PPE dimer-like"/>
    <property type="match status" value="1"/>
</dbReference>
<organism>
    <name type="scientific">Mycobacterium tuberculosis (strain ATCC 25618 / H37Rv)</name>
    <dbReference type="NCBI Taxonomy" id="83332"/>
    <lineage>
        <taxon>Bacteria</taxon>
        <taxon>Bacillati</taxon>
        <taxon>Actinomycetota</taxon>
        <taxon>Actinomycetes</taxon>
        <taxon>Mycobacteriales</taxon>
        <taxon>Mycobacteriaceae</taxon>
        <taxon>Mycobacterium</taxon>
        <taxon>Mycobacterium tuberculosis complex</taxon>
    </lineage>
</organism>
<proteinExistence type="inferred from homology"/>